<proteinExistence type="inferred from homology"/>
<keyword id="KW-0067">ATP-binding</keyword>
<keyword id="KW-0342">GTP-binding</keyword>
<keyword id="KW-0547">Nucleotide-binding</keyword>
<keyword id="KW-1185">Reference proteome</keyword>
<feature type="chain" id="PRO_0000258960" description="Nucleotide-binding protein DSY4845">
    <location>
        <begin position="1"/>
        <end position="297"/>
    </location>
</feature>
<feature type="binding site" evidence="1">
    <location>
        <begin position="13"/>
        <end position="20"/>
    </location>
    <ligand>
        <name>ATP</name>
        <dbReference type="ChEBI" id="CHEBI:30616"/>
    </ligand>
</feature>
<feature type="binding site" evidence="1">
    <location>
        <begin position="64"/>
        <end position="67"/>
    </location>
    <ligand>
        <name>GTP</name>
        <dbReference type="ChEBI" id="CHEBI:37565"/>
    </ligand>
</feature>
<dbReference type="EMBL" id="AP008230">
    <property type="protein sequence ID" value="BAE86634.1"/>
    <property type="molecule type" value="Genomic_DNA"/>
</dbReference>
<dbReference type="SMR" id="Q24MV8"/>
<dbReference type="STRING" id="138119.DSY4845"/>
<dbReference type="KEGG" id="dsy:DSY4845"/>
<dbReference type="eggNOG" id="COG1660">
    <property type="taxonomic scope" value="Bacteria"/>
</dbReference>
<dbReference type="HOGENOM" id="CLU_059558_0_0_9"/>
<dbReference type="Proteomes" id="UP000001946">
    <property type="component" value="Chromosome"/>
</dbReference>
<dbReference type="GO" id="GO:0005524">
    <property type="term" value="F:ATP binding"/>
    <property type="evidence" value="ECO:0007669"/>
    <property type="project" value="UniProtKB-UniRule"/>
</dbReference>
<dbReference type="GO" id="GO:0005525">
    <property type="term" value="F:GTP binding"/>
    <property type="evidence" value="ECO:0007669"/>
    <property type="project" value="UniProtKB-UniRule"/>
</dbReference>
<dbReference type="HAMAP" id="MF_00636">
    <property type="entry name" value="RapZ_like"/>
    <property type="match status" value="1"/>
</dbReference>
<dbReference type="InterPro" id="IPR027417">
    <property type="entry name" value="P-loop_NTPase"/>
</dbReference>
<dbReference type="InterPro" id="IPR005337">
    <property type="entry name" value="RapZ-like"/>
</dbReference>
<dbReference type="InterPro" id="IPR053930">
    <property type="entry name" value="RapZ-like_N"/>
</dbReference>
<dbReference type="InterPro" id="IPR053931">
    <property type="entry name" value="RapZ_C"/>
</dbReference>
<dbReference type="NCBIfam" id="NF003828">
    <property type="entry name" value="PRK05416.1"/>
    <property type="match status" value="1"/>
</dbReference>
<dbReference type="PANTHER" id="PTHR30448">
    <property type="entry name" value="RNASE ADAPTER PROTEIN RAPZ"/>
    <property type="match status" value="1"/>
</dbReference>
<dbReference type="PANTHER" id="PTHR30448:SF0">
    <property type="entry name" value="RNASE ADAPTER PROTEIN RAPZ"/>
    <property type="match status" value="1"/>
</dbReference>
<dbReference type="Pfam" id="PF22740">
    <property type="entry name" value="PapZ_C"/>
    <property type="match status" value="1"/>
</dbReference>
<dbReference type="Pfam" id="PF03668">
    <property type="entry name" value="RapZ-like_N"/>
    <property type="match status" value="1"/>
</dbReference>
<dbReference type="PIRSF" id="PIRSF005052">
    <property type="entry name" value="P-loopkin"/>
    <property type="match status" value="1"/>
</dbReference>
<dbReference type="SUPFAM" id="SSF52540">
    <property type="entry name" value="P-loop containing nucleoside triphosphate hydrolases"/>
    <property type="match status" value="1"/>
</dbReference>
<protein>
    <recommendedName>
        <fullName evidence="1">Nucleotide-binding protein DSY4845</fullName>
    </recommendedName>
</protein>
<organism>
    <name type="scientific">Desulfitobacterium hafniense (strain Y51)</name>
    <dbReference type="NCBI Taxonomy" id="138119"/>
    <lineage>
        <taxon>Bacteria</taxon>
        <taxon>Bacillati</taxon>
        <taxon>Bacillota</taxon>
        <taxon>Clostridia</taxon>
        <taxon>Eubacteriales</taxon>
        <taxon>Desulfitobacteriaceae</taxon>
        <taxon>Desulfitobacterium</taxon>
    </lineage>
</organism>
<accession>Q24MV8</accession>
<reference key="1">
    <citation type="journal article" date="2006" name="J. Bacteriol.">
        <title>Complete genome sequence of the dehalorespiring bacterium Desulfitobacterium hafniense Y51 and comparison with Dehalococcoides ethenogenes 195.</title>
        <authorList>
            <person name="Nonaka H."/>
            <person name="Keresztes G."/>
            <person name="Shinoda Y."/>
            <person name="Ikenaga Y."/>
            <person name="Abe M."/>
            <person name="Naito K."/>
            <person name="Inatomi K."/>
            <person name="Furukawa K."/>
            <person name="Inui M."/>
            <person name="Yukawa H."/>
        </authorList>
    </citation>
    <scope>NUCLEOTIDE SEQUENCE [LARGE SCALE GENOMIC DNA]</scope>
    <source>
        <strain>Y51</strain>
    </source>
</reference>
<comment type="function">
    <text evidence="1">Displays ATPase and GTPase activities.</text>
</comment>
<comment type="similarity">
    <text evidence="1">Belongs to the RapZ-like family.</text>
</comment>
<gene>
    <name type="ordered locus">DSY4845</name>
</gene>
<sequence length="297" mass="33182">MLSKQVRLLVITGLSGAGKTQALQSLEDQGYFCVDNLPPSLILKFAELCTQSQGKVTRAAIVCDLRGGEFFSSLAEALGDLHREGFHYEILFLEASDEVLVGRYKESRRRHPLSPSGGILEGIQMERQMLTELRGVAHKIMDTSNLSSQQLRHQVAESFGNEQASGHLAVSVVSFGFKYAIPLDVDLLIDVRFLPNPFYVAELRPLTGEHPQVQDYIFSNPVAQEFVDKYLGLLEFILPYYVKEGKRHLVIGVGCTGGQHRSVAIAERIGLFLQERSYMMSVKHRDAARNRKGDKSK</sequence>
<name>Y4845_DESHY</name>
<evidence type="ECO:0000255" key="1">
    <source>
        <dbReference type="HAMAP-Rule" id="MF_00636"/>
    </source>
</evidence>